<name>S26A8_MACFA</name>
<protein>
    <recommendedName>
        <fullName evidence="2">Testis anion transporter 1</fullName>
    </recommendedName>
    <alternativeName>
        <fullName>Anion exchange transporter</fullName>
    </alternativeName>
    <alternativeName>
        <fullName>Solute carrier family 26 member 8</fullName>
    </alternativeName>
</protein>
<feature type="chain" id="PRO_0000322587" description="Testis anion transporter 1">
    <location>
        <begin position="1"/>
        <end position="727"/>
    </location>
</feature>
<feature type="topological domain" description="Cytoplasmic" evidence="3">
    <location>
        <begin position="1"/>
        <end position="23"/>
    </location>
</feature>
<feature type="transmembrane region" description="Helical" evidence="3">
    <location>
        <begin position="24"/>
        <end position="44"/>
    </location>
</feature>
<feature type="topological domain" description="Extracellular" evidence="3">
    <location>
        <begin position="45"/>
        <end position="47"/>
    </location>
</feature>
<feature type="transmembrane region" description="Helical" evidence="3">
    <location>
        <begin position="48"/>
        <end position="68"/>
    </location>
</feature>
<feature type="topological domain" description="Cytoplasmic" evidence="3">
    <location>
        <begin position="69"/>
        <end position="74"/>
    </location>
</feature>
<feature type="transmembrane region" description="Helical" evidence="3">
    <location>
        <begin position="75"/>
        <end position="95"/>
    </location>
</feature>
<feature type="topological domain" description="Extracellular" evidence="3">
    <location>
        <begin position="96"/>
        <end position="130"/>
    </location>
</feature>
<feature type="transmembrane region" description="Helical" evidence="3">
    <location>
        <begin position="131"/>
        <end position="151"/>
    </location>
</feature>
<feature type="topological domain" description="Cytoplasmic" evidence="3">
    <location>
        <begin position="152"/>
        <end position="160"/>
    </location>
</feature>
<feature type="transmembrane region" description="Helical" evidence="3">
    <location>
        <begin position="161"/>
        <end position="181"/>
    </location>
</feature>
<feature type="topological domain" description="Extracellular" evidence="3">
    <location>
        <begin position="182"/>
        <end position="198"/>
    </location>
</feature>
<feature type="transmembrane region" description="Helical" evidence="3">
    <location>
        <begin position="199"/>
        <end position="219"/>
    </location>
</feature>
<feature type="topological domain" description="Cytoplasmic" evidence="3">
    <location>
        <begin position="220"/>
        <end position="235"/>
    </location>
</feature>
<feature type="transmembrane region" description="Helical" evidence="3">
    <location>
        <begin position="236"/>
        <end position="256"/>
    </location>
</feature>
<feature type="topological domain" description="Extracellular" evidence="3">
    <location>
        <begin position="257"/>
        <end position="283"/>
    </location>
</feature>
<feature type="transmembrane region" description="Helical" evidence="3">
    <location>
        <begin position="284"/>
        <end position="304"/>
    </location>
</feature>
<feature type="topological domain" description="Cytoplasmic" evidence="3">
    <location>
        <begin position="305"/>
        <end position="360"/>
    </location>
</feature>
<feature type="transmembrane region" description="Helical" evidence="3">
    <location>
        <begin position="361"/>
        <end position="381"/>
    </location>
</feature>
<feature type="topological domain" description="Extracellular" evidence="3">
    <location>
        <begin position="382"/>
        <end position="383"/>
    </location>
</feature>
<feature type="transmembrane region" description="Helical" evidence="3">
    <location>
        <begin position="384"/>
        <end position="404"/>
    </location>
</feature>
<feature type="topological domain" description="Cytoplasmic" evidence="3">
    <location>
        <begin position="405"/>
        <end position="424"/>
    </location>
</feature>
<feature type="transmembrane region" description="Helical" evidence="3">
    <location>
        <begin position="425"/>
        <end position="445"/>
    </location>
</feature>
<feature type="topological domain" description="Extracellular" evidence="3">
    <location>
        <begin position="446"/>
        <end position="727"/>
    </location>
</feature>
<feature type="domain" description="STAS" evidence="4">
    <location>
        <begin position="471"/>
        <end position="722"/>
    </location>
</feature>
<feature type="region of interest" description="Interaction with RACGAP1" evidence="2">
    <location>
        <begin position="592"/>
        <end position="727"/>
    </location>
</feature>
<feature type="glycosylation site" description="N-linked (GlcNAc...) asparagine" evidence="3">
    <location>
        <position position="120"/>
    </location>
</feature>
<dbReference type="EMBL" id="AB179070">
    <property type="protein sequence ID" value="BAE02121.1"/>
    <property type="molecule type" value="mRNA"/>
</dbReference>
<dbReference type="SMR" id="Q4R445"/>
<dbReference type="STRING" id="9541.ENSMFAP00000016195"/>
<dbReference type="GlyCosmos" id="Q4R445">
    <property type="glycosylation" value="1 site, No reported glycans"/>
</dbReference>
<dbReference type="eggNOG" id="KOG0236">
    <property type="taxonomic scope" value="Eukaryota"/>
</dbReference>
<dbReference type="Proteomes" id="UP000233100">
    <property type="component" value="Unplaced"/>
</dbReference>
<dbReference type="GO" id="GO:0016020">
    <property type="term" value="C:membrane"/>
    <property type="evidence" value="ECO:0007669"/>
    <property type="project" value="UniProtKB-SubCell"/>
</dbReference>
<dbReference type="GO" id="GO:0097227">
    <property type="term" value="C:sperm annulus"/>
    <property type="evidence" value="ECO:0000250"/>
    <property type="project" value="UniProtKB"/>
</dbReference>
<dbReference type="GO" id="GO:0160044">
    <property type="term" value="F:sulfate:chloride antiporter activity"/>
    <property type="evidence" value="ECO:0000250"/>
    <property type="project" value="UniProtKB"/>
</dbReference>
<dbReference type="GO" id="GO:0030154">
    <property type="term" value="P:cell differentiation"/>
    <property type="evidence" value="ECO:0007669"/>
    <property type="project" value="UniProtKB-KW"/>
</dbReference>
<dbReference type="GO" id="GO:0006821">
    <property type="term" value="P:chloride transport"/>
    <property type="evidence" value="ECO:0000250"/>
    <property type="project" value="UniProtKB"/>
</dbReference>
<dbReference type="GO" id="GO:0051321">
    <property type="term" value="P:meiotic cell cycle"/>
    <property type="evidence" value="ECO:0007669"/>
    <property type="project" value="UniProtKB-KW"/>
</dbReference>
<dbReference type="GO" id="GO:0007283">
    <property type="term" value="P:spermatogenesis"/>
    <property type="evidence" value="ECO:0007669"/>
    <property type="project" value="UniProtKB-KW"/>
</dbReference>
<dbReference type="GO" id="GO:1902358">
    <property type="term" value="P:sulfate transmembrane transport"/>
    <property type="evidence" value="ECO:0000250"/>
    <property type="project" value="UniProtKB"/>
</dbReference>
<dbReference type="Gene3D" id="3.30.750.24">
    <property type="entry name" value="STAS domain"/>
    <property type="match status" value="1"/>
</dbReference>
<dbReference type="InterPro" id="IPR011547">
    <property type="entry name" value="SLC26A/SulP_dom"/>
</dbReference>
<dbReference type="InterPro" id="IPR001902">
    <property type="entry name" value="SLC26A/SulP_fam"/>
</dbReference>
<dbReference type="InterPro" id="IPR002645">
    <property type="entry name" value="STAS_dom"/>
</dbReference>
<dbReference type="InterPro" id="IPR036513">
    <property type="entry name" value="STAS_dom_sf"/>
</dbReference>
<dbReference type="PANTHER" id="PTHR11814">
    <property type="entry name" value="SULFATE TRANSPORTER"/>
    <property type="match status" value="1"/>
</dbReference>
<dbReference type="Pfam" id="PF01740">
    <property type="entry name" value="STAS"/>
    <property type="match status" value="1"/>
</dbReference>
<dbReference type="Pfam" id="PF00916">
    <property type="entry name" value="Sulfate_transp"/>
    <property type="match status" value="1"/>
</dbReference>
<dbReference type="SUPFAM" id="SSF52091">
    <property type="entry name" value="SpoIIaa-like"/>
    <property type="match status" value="1"/>
</dbReference>
<dbReference type="PROSITE" id="PS50801">
    <property type="entry name" value="STAS"/>
    <property type="match status" value="1"/>
</dbReference>
<evidence type="ECO:0000250" key="1">
    <source>
        <dbReference type="UniProtKB" id="Q8R0C3"/>
    </source>
</evidence>
<evidence type="ECO:0000250" key="2">
    <source>
        <dbReference type="UniProtKB" id="Q96RN1"/>
    </source>
</evidence>
<evidence type="ECO:0000255" key="3"/>
<evidence type="ECO:0000255" key="4">
    <source>
        <dbReference type="PROSITE-ProRule" id="PRU00198"/>
    </source>
</evidence>
<evidence type="ECO:0000269" key="5">
    <source ref="1"/>
</evidence>
<evidence type="ECO:0000312" key="6">
    <source>
        <dbReference type="EMBL" id="BAE02121.1"/>
    </source>
</evidence>
<reference evidence="6" key="1">
    <citation type="submission" date="2005-06" db="EMBL/GenBank/DDBJ databases">
        <title>DNA sequences of macaque genes expressed in brain or testis and its evolutionary implications.</title>
        <authorList>
            <consortium name="International consortium for macaque cDNA sequencing and analysis"/>
        </authorList>
    </citation>
    <scope>NUCLEOTIDE SEQUENCE [LARGE SCALE MRNA]</scope>
    <source>
        <tissue evidence="5">Testis</tissue>
    </source>
</reference>
<proteinExistence type="evidence at transcript level"/>
<accession>Q4R445</accession>
<keyword id="KW-0039">Anion exchange</keyword>
<keyword id="KW-0217">Developmental protein</keyword>
<keyword id="KW-0221">Differentiation</keyword>
<keyword id="KW-0325">Glycoprotein</keyword>
<keyword id="KW-0406">Ion transport</keyword>
<keyword id="KW-0469">Meiosis</keyword>
<keyword id="KW-0472">Membrane</keyword>
<keyword id="KW-1185">Reference proteome</keyword>
<keyword id="KW-0744">Spermatogenesis</keyword>
<keyword id="KW-0812">Transmembrane</keyword>
<keyword id="KW-1133">Transmembrane helix</keyword>
<keyword id="KW-0813">Transport</keyword>
<organism>
    <name type="scientific">Macaca fascicularis</name>
    <name type="common">Crab-eating macaque</name>
    <name type="synonym">Cynomolgus monkey</name>
    <dbReference type="NCBI Taxonomy" id="9541"/>
    <lineage>
        <taxon>Eukaryota</taxon>
        <taxon>Metazoa</taxon>
        <taxon>Chordata</taxon>
        <taxon>Craniata</taxon>
        <taxon>Vertebrata</taxon>
        <taxon>Euteleostomi</taxon>
        <taxon>Mammalia</taxon>
        <taxon>Eutheria</taxon>
        <taxon>Euarchontoglires</taxon>
        <taxon>Primates</taxon>
        <taxon>Haplorrhini</taxon>
        <taxon>Catarrhini</taxon>
        <taxon>Cercopithecidae</taxon>
        <taxon>Cercopithecinae</taxon>
        <taxon>Macaca</taxon>
    </lineage>
</organism>
<gene>
    <name evidence="2 6" type="primary">SLC26A8</name>
    <name type="ORF">QtsA-12484</name>
</gene>
<sequence length="727" mass="80618">MLTIFPFLEWMCMYRLKDWLLGDLLAGISVGLVQVPQGLTLSLLARQLIPPLNIAYAAFCSSVIYVIFGSCHQMSIGSFFLVSALLINVLKISPLNNGHLVMGSFLKDEFSAPSYLMGYNKSLSVVATTTFLTGIIQLIMGVLGLGFIATYLPESAMSAYLAAVALHIMLSQLTCIFGIMISFHAGPISFFYDIINYCVALPKANSTSILLFLTVVVALRINKCIRISFNQYPIEFPMELFLIIGFTVIGNKITMATETSQTLIDMIPYSFLFPVTPDFSVLPKIILQAISLSLVSSFLLVFLGKKIASLHNYSVNSNQDLIAIGLCNVVSSFFRSCVFTGAVARTIIQDKSGGRQQFASLVGAGVMLLLMVKMGHFFYALPNAVLAGIILSNVVPYLETISNLPSLWRQDQYDCALWMMTFSSSIFLGLDIGLIISVVSAFFITSVRSHRAKILLLGQIPNTNIYRSVNDYREIITIPGVKIFQCCSSITFVNVYYLKHKLLKEVGMVRVPLKEEEIFSLFNSSDTSLQGEKICRCFCNCDDLEPLPRILYTERFENKLDPDASSVNLIHCSHFESVNTSQTASEDQVPYTVSSMSQKNQGQQYEEVEKVWLPNNSSRNSSPGLPDVAESQGRRSLIPYSDASLLPSVHTIILDFSMVHYVDSQGLVVLRQICNAFRNANILILIAGCHSSLFCTGITLPDHITKCQQLSLNSLSRLPSFHLQHIF</sequence>
<comment type="function">
    <text evidence="1 2">Antiporter that mediates the exchange of sulfate and oxalate against chloride ions across a membrane. Stimulates anion transport activity of CFTR (By similarity). May cooperate with CFTR in the regulation of chloride and bicarbonate ions fluxes required for activation of the ADCY10/PKA pathway during sperm motility and sperm capacitation. May play a role in sperm tail differentiation and motility and hence male fertility (By similarity).</text>
</comment>
<comment type="catalytic activity">
    <reaction evidence="2">
        <text>sulfate(out) + chloride(in) = sulfate(in) + chloride(out)</text>
        <dbReference type="Rhea" id="RHEA:75295"/>
        <dbReference type="ChEBI" id="CHEBI:16189"/>
        <dbReference type="ChEBI" id="CHEBI:17996"/>
    </reaction>
</comment>
<comment type="catalytic activity">
    <reaction evidence="2">
        <text>oxalate(in) + chloride(out) = oxalate(out) + chloride(in)</text>
        <dbReference type="Rhea" id="RHEA:72263"/>
        <dbReference type="ChEBI" id="CHEBI:17996"/>
        <dbReference type="ChEBI" id="CHEBI:30623"/>
    </reaction>
</comment>
<comment type="subunit">
    <text evidence="2">Interacts with RACGAP1. Interacts with CFTR; stimulates anion transport activity of CFTR.</text>
</comment>
<comment type="subcellular location">
    <subcellularLocation>
        <location evidence="2">Membrane</location>
        <topology evidence="3">Multi-pass membrane protein</topology>
    </subcellularLocation>
    <text evidence="2">Located at both the annulus and the equatorial segment of the human sperm head.</text>
</comment>
<comment type="PTM">
    <text evidence="2">N-glycosylated.</text>
</comment>
<comment type="similarity">
    <text evidence="3">Belongs to the SLC26A/SulP transporter (TC 2.A.53) family.</text>
</comment>